<feature type="signal peptide" description="Tat-type signal" evidence="1">
    <location>
        <begin position="1"/>
        <end position="32"/>
    </location>
</feature>
<feature type="chain" id="PRO_0000045991" description="Periplasmic nitrate reductase" evidence="1">
    <location>
        <begin position="33"/>
        <end position="830"/>
    </location>
</feature>
<feature type="domain" description="4Fe-4S Mo/W bis-MGD-type" evidence="1">
    <location>
        <begin position="39"/>
        <end position="95"/>
    </location>
</feature>
<feature type="binding site" evidence="1">
    <location>
        <position position="46"/>
    </location>
    <ligand>
        <name>[4Fe-4S] cluster</name>
        <dbReference type="ChEBI" id="CHEBI:49883"/>
    </ligand>
</feature>
<feature type="binding site" evidence="1">
    <location>
        <position position="49"/>
    </location>
    <ligand>
        <name>[4Fe-4S] cluster</name>
        <dbReference type="ChEBI" id="CHEBI:49883"/>
    </ligand>
</feature>
<feature type="binding site" evidence="1">
    <location>
        <position position="53"/>
    </location>
    <ligand>
        <name>[4Fe-4S] cluster</name>
        <dbReference type="ChEBI" id="CHEBI:49883"/>
    </ligand>
</feature>
<feature type="binding site" evidence="1">
    <location>
        <position position="81"/>
    </location>
    <ligand>
        <name>[4Fe-4S] cluster</name>
        <dbReference type="ChEBI" id="CHEBI:49883"/>
    </ligand>
</feature>
<feature type="binding site" evidence="1">
    <location>
        <position position="83"/>
    </location>
    <ligand>
        <name>Mo-bis(molybdopterin guanine dinucleotide)</name>
        <dbReference type="ChEBI" id="CHEBI:60539"/>
    </ligand>
</feature>
<feature type="binding site" evidence="1">
    <location>
        <position position="151"/>
    </location>
    <ligand>
        <name>Mo-bis(molybdopterin guanine dinucleotide)</name>
        <dbReference type="ChEBI" id="CHEBI:60539"/>
    </ligand>
</feature>
<feature type="binding site" evidence="1">
    <location>
        <position position="176"/>
    </location>
    <ligand>
        <name>Mo-bis(molybdopterin guanine dinucleotide)</name>
        <dbReference type="ChEBI" id="CHEBI:60539"/>
    </ligand>
</feature>
<feature type="binding site" evidence="1">
    <location>
        <position position="180"/>
    </location>
    <ligand>
        <name>Mo-bis(molybdopterin guanine dinucleotide)</name>
        <dbReference type="ChEBI" id="CHEBI:60539"/>
    </ligand>
</feature>
<feature type="binding site" evidence="1">
    <location>
        <begin position="213"/>
        <end position="220"/>
    </location>
    <ligand>
        <name>Mo-bis(molybdopterin guanine dinucleotide)</name>
        <dbReference type="ChEBI" id="CHEBI:60539"/>
    </ligand>
</feature>
<feature type="binding site" evidence="1">
    <location>
        <begin position="244"/>
        <end position="248"/>
    </location>
    <ligand>
        <name>Mo-bis(molybdopterin guanine dinucleotide)</name>
        <dbReference type="ChEBI" id="CHEBI:60539"/>
    </ligand>
</feature>
<feature type="binding site" evidence="1">
    <location>
        <position position="374"/>
    </location>
    <ligand>
        <name>Mo-bis(molybdopterin guanine dinucleotide)</name>
        <dbReference type="ChEBI" id="CHEBI:60539"/>
    </ligand>
</feature>
<feature type="binding site" evidence="1">
    <location>
        <position position="378"/>
    </location>
    <ligand>
        <name>Mo-bis(molybdopterin guanine dinucleotide)</name>
        <dbReference type="ChEBI" id="CHEBI:60539"/>
    </ligand>
</feature>
<feature type="binding site" evidence="1">
    <location>
        <position position="484"/>
    </location>
    <ligand>
        <name>Mo-bis(molybdopterin guanine dinucleotide)</name>
        <dbReference type="ChEBI" id="CHEBI:60539"/>
    </ligand>
</feature>
<feature type="binding site" evidence="1">
    <location>
        <begin position="510"/>
        <end position="511"/>
    </location>
    <ligand>
        <name>Mo-bis(molybdopterin guanine dinucleotide)</name>
        <dbReference type="ChEBI" id="CHEBI:60539"/>
    </ligand>
</feature>
<feature type="binding site" evidence="1">
    <location>
        <position position="533"/>
    </location>
    <ligand>
        <name>Mo-bis(molybdopterin guanine dinucleotide)</name>
        <dbReference type="ChEBI" id="CHEBI:60539"/>
    </ligand>
</feature>
<feature type="binding site" evidence="1">
    <location>
        <position position="560"/>
    </location>
    <ligand>
        <name>Mo-bis(molybdopterin guanine dinucleotide)</name>
        <dbReference type="ChEBI" id="CHEBI:60539"/>
    </ligand>
</feature>
<feature type="binding site" evidence="1">
    <location>
        <begin position="720"/>
        <end position="729"/>
    </location>
    <ligand>
        <name>Mo-bis(molybdopterin guanine dinucleotide)</name>
        <dbReference type="ChEBI" id="CHEBI:60539"/>
    </ligand>
</feature>
<feature type="binding site" evidence="1">
    <location>
        <position position="796"/>
    </location>
    <ligand>
        <name>substrate</name>
    </ligand>
</feature>
<feature type="binding site" evidence="1">
    <location>
        <position position="804"/>
    </location>
    <ligand>
        <name>Mo-bis(molybdopterin guanine dinucleotide)</name>
        <dbReference type="ChEBI" id="CHEBI:60539"/>
    </ligand>
</feature>
<feature type="binding site" evidence="1">
    <location>
        <position position="821"/>
    </location>
    <ligand>
        <name>Mo-bis(molybdopterin guanine dinucleotide)</name>
        <dbReference type="ChEBI" id="CHEBI:60539"/>
    </ligand>
</feature>
<comment type="function">
    <text evidence="1">Catalytic subunit of the periplasmic nitrate reductase complex NapAB. Receives electrons from NapB and catalyzes the reduction of nitrate to nitrite.</text>
</comment>
<comment type="catalytic activity">
    <reaction evidence="1">
        <text>2 Fe(II)-[cytochrome] + nitrate + 2 H(+) = 2 Fe(III)-[cytochrome] + nitrite + H2O</text>
        <dbReference type="Rhea" id="RHEA:12909"/>
        <dbReference type="Rhea" id="RHEA-COMP:11777"/>
        <dbReference type="Rhea" id="RHEA-COMP:11778"/>
        <dbReference type="ChEBI" id="CHEBI:15377"/>
        <dbReference type="ChEBI" id="CHEBI:15378"/>
        <dbReference type="ChEBI" id="CHEBI:16301"/>
        <dbReference type="ChEBI" id="CHEBI:17632"/>
        <dbReference type="ChEBI" id="CHEBI:29033"/>
        <dbReference type="ChEBI" id="CHEBI:29034"/>
        <dbReference type="EC" id="1.9.6.1"/>
    </reaction>
</comment>
<comment type="cofactor">
    <cofactor evidence="1">
        <name>[4Fe-4S] cluster</name>
        <dbReference type="ChEBI" id="CHEBI:49883"/>
    </cofactor>
    <text evidence="1">Binds 1 [4Fe-4S] cluster.</text>
</comment>
<comment type="cofactor">
    <cofactor evidence="1">
        <name>Mo-bis(molybdopterin guanine dinucleotide)</name>
        <dbReference type="ChEBI" id="CHEBI:60539"/>
    </cofactor>
    <text evidence="1">Binds 1 molybdenum-bis(molybdopterin guanine dinucleotide) (Mo-bis-MGD) cofactor per subunit.</text>
</comment>
<comment type="subunit">
    <text evidence="1">Component of the periplasmic nitrate reductase NapAB complex composed of NapA and NapB.</text>
</comment>
<comment type="subcellular location">
    <subcellularLocation>
        <location evidence="1">Periplasm</location>
    </subcellularLocation>
</comment>
<comment type="PTM">
    <text evidence="1">Predicted to be exported by the Tat system. The position of the signal peptide cleavage has not been experimentally proven.</text>
</comment>
<comment type="similarity">
    <text evidence="1">Belongs to the prokaryotic molybdopterin-containing oxidoreductase family. NasA/NapA/NarB subfamily.</text>
</comment>
<comment type="sequence caution" evidence="2">
    <conflict type="erroneous initiation">
        <sequence resource="EMBL-CDS" id="AAU38888"/>
    </conflict>
</comment>
<organism>
    <name type="scientific">Mannheimia succiniciproducens (strain KCTC 0769BP / MBEL55E)</name>
    <dbReference type="NCBI Taxonomy" id="221988"/>
    <lineage>
        <taxon>Bacteria</taxon>
        <taxon>Pseudomonadati</taxon>
        <taxon>Pseudomonadota</taxon>
        <taxon>Gammaproteobacteria</taxon>
        <taxon>Pasteurellales</taxon>
        <taxon>Pasteurellaceae</taxon>
        <taxon>Basfia</taxon>
    </lineage>
</organism>
<reference key="1">
    <citation type="journal article" date="2004" name="Nat. Biotechnol.">
        <title>The genome sequence of the capnophilic rumen bacterium Mannheimia succiniciproducens.</title>
        <authorList>
            <person name="Hong S.H."/>
            <person name="Kim J.S."/>
            <person name="Lee S.Y."/>
            <person name="In Y.H."/>
            <person name="Choi S.S."/>
            <person name="Rih J.-K."/>
            <person name="Kim C.H."/>
            <person name="Jeong H."/>
            <person name="Hur C.G."/>
            <person name="Kim J.J."/>
        </authorList>
    </citation>
    <scope>NUCLEOTIDE SEQUENCE [LARGE SCALE GENOMIC DNA]</scope>
    <source>
        <strain>KCTC 0769BP / MBEL55E</strain>
    </source>
</reference>
<accession>Q65Q72</accession>
<protein>
    <recommendedName>
        <fullName evidence="1">Periplasmic nitrate reductase</fullName>
        <ecNumber evidence="1">1.9.6.1</ecNumber>
    </recommendedName>
</protein>
<evidence type="ECO:0000255" key="1">
    <source>
        <dbReference type="HAMAP-Rule" id="MF_01630"/>
    </source>
</evidence>
<evidence type="ECO:0000305" key="2"/>
<keyword id="KW-0004">4Fe-4S</keyword>
<keyword id="KW-0249">Electron transport</keyword>
<keyword id="KW-0408">Iron</keyword>
<keyword id="KW-0411">Iron-sulfur</keyword>
<keyword id="KW-0479">Metal-binding</keyword>
<keyword id="KW-0500">Molybdenum</keyword>
<keyword id="KW-0534">Nitrate assimilation</keyword>
<keyword id="KW-0560">Oxidoreductase</keyword>
<keyword id="KW-0574">Periplasm</keyword>
<keyword id="KW-0732">Signal</keyword>
<keyword id="KW-0813">Transport</keyword>
<gene>
    <name evidence="1" type="primary">napA</name>
    <name type="ordered locus">MS2281</name>
</gene>
<dbReference type="EC" id="1.9.6.1" evidence="1"/>
<dbReference type="EMBL" id="AE016827">
    <property type="protein sequence ID" value="AAU38888.1"/>
    <property type="status" value="ALT_INIT"/>
    <property type="molecule type" value="Genomic_DNA"/>
</dbReference>
<dbReference type="RefSeq" id="WP_041640098.1">
    <property type="nucleotide sequence ID" value="NC_006300.1"/>
</dbReference>
<dbReference type="SMR" id="Q65Q72"/>
<dbReference type="STRING" id="221988.MS2281"/>
<dbReference type="KEGG" id="msu:MS2281"/>
<dbReference type="eggNOG" id="COG0243">
    <property type="taxonomic scope" value="Bacteria"/>
</dbReference>
<dbReference type="HOGENOM" id="CLU_000422_13_4_6"/>
<dbReference type="OrthoDB" id="9816402at2"/>
<dbReference type="Proteomes" id="UP000000607">
    <property type="component" value="Chromosome"/>
</dbReference>
<dbReference type="GO" id="GO:0016020">
    <property type="term" value="C:membrane"/>
    <property type="evidence" value="ECO:0007669"/>
    <property type="project" value="TreeGrafter"/>
</dbReference>
<dbReference type="GO" id="GO:0009325">
    <property type="term" value="C:nitrate reductase complex"/>
    <property type="evidence" value="ECO:0007669"/>
    <property type="project" value="TreeGrafter"/>
</dbReference>
<dbReference type="GO" id="GO:0042597">
    <property type="term" value="C:periplasmic space"/>
    <property type="evidence" value="ECO:0007669"/>
    <property type="project" value="UniProtKB-SubCell"/>
</dbReference>
<dbReference type="GO" id="GO:0051539">
    <property type="term" value="F:4 iron, 4 sulfur cluster binding"/>
    <property type="evidence" value="ECO:0007669"/>
    <property type="project" value="UniProtKB-KW"/>
</dbReference>
<dbReference type="GO" id="GO:0009055">
    <property type="term" value="F:electron transfer activity"/>
    <property type="evidence" value="ECO:0007669"/>
    <property type="project" value="UniProtKB-UniRule"/>
</dbReference>
<dbReference type="GO" id="GO:0005506">
    <property type="term" value="F:iron ion binding"/>
    <property type="evidence" value="ECO:0007669"/>
    <property type="project" value="UniProtKB-UniRule"/>
</dbReference>
<dbReference type="GO" id="GO:0030151">
    <property type="term" value="F:molybdenum ion binding"/>
    <property type="evidence" value="ECO:0007669"/>
    <property type="project" value="InterPro"/>
</dbReference>
<dbReference type="GO" id="GO:0043546">
    <property type="term" value="F:molybdopterin cofactor binding"/>
    <property type="evidence" value="ECO:0007669"/>
    <property type="project" value="InterPro"/>
</dbReference>
<dbReference type="GO" id="GO:0050140">
    <property type="term" value="F:nitrate reductase (cytochrome) activity"/>
    <property type="evidence" value="ECO:0007669"/>
    <property type="project" value="UniProtKB-EC"/>
</dbReference>
<dbReference type="GO" id="GO:0045333">
    <property type="term" value="P:cellular respiration"/>
    <property type="evidence" value="ECO:0007669"/>
    <property type="project" value="UniProtKB-ARBA"/>
</dbReference>
<dbReference type="GO" id="GO:0006777">
    <property type="term" value="P:Mo-molybdopterin cofactor biosynthetic process"/>
    <property type="evidence" value="ECO:0007669"/>
    <property type="project" value="UniProtKB-UniRule"/>
</dbReference>
<dbReference type="GO" id="GO:0042128">
    <property type="term" value="P:nitrate assimilation"/>
    <property type="evidence" value="ECO:0007669"/>
    <property type="project" value="UniProtKB-UniRule"/>
</dbReference>
<dbReference type="CDD" id="cd02791">
    <property type="entry name" value="MopB_CT_Nitrate-R-NapA-like"/>
    <property type="match status" value="1"/>
</dbReference>
<dbReference type="CDD" id="cd02754">
    <property type="entry name" value="MopB_Nitrate-R-NapA-like"/>
    <property type="match status" value="1"/>
</dbReference>
<dbReference type="FunFam" id="2.40.40.20:FF:000005">
    <property type="entry name" value="Periplasmic nitrate reductase"/>
    <property type="match status" value="1"/>
</dbReference>
<dbReference type="Gene3D" id="2.40.40.20">
    <property type="match status" value="1"/>
</dbReference>
<dbReference type="Gene3D" id="3.30.200.210">
    <property type="match status" value="1"/>
</dbReference>
<dbReference type="Gene3D" id="3.40.50.740">
    <property type="match status" value="1"/>
</dbReference>
<dbReference type="Gene3D" id="3.40.228.10">
    <property type="entry name" value="Dimethylsulfoxide Reductase, domain 2"/>
    <property type="match status" value="1"/>
</dbReference>
<dbReference type="HAMAP" id="MF_01630">
    <property type="entry name" value="Nitrate_reduct_NapA"/>
    <property type="match status" value="1"/>
</dbReference>
<dbReference type="InterPro" id="IPR009010">
    <property type="entry name" value="Asp_de-COase-like_dom_sf"/>
</dbReference>
<dbReference type="InterPro" id="IPR041957">
    <property type="entry name" value="CT_Nitrate-R-NapA-like"/>
</dbReference>
<dbReference type="InterPro" id="IPR006657">
    <property type="entry name" value="MoPterin_dinucl-bd_dom"/>
</dbReference>
<dbReference type="InterPro" id="IPR006656">
    <property type="entry name" value="Mopterin_OxRdtase"/>
</dbReference>
<dbReference type="InterPro" id="IPR006963">
    <property type="entry name" value="Mopterin_OxRdtase_4Fe-4S_dom"/>
</dbReference>
<dbReference type="InterPro" id="IPR027467">
    <property type="entry name" value="MopterinOxRdtase_cofactor_BS"/>
</dbReference>
<dbReference type="InterPro" id="IPR010051">
    <property type="entry name" value="Periplasm_NO3_reductase_lsu"/>
</dbReference>
<dbReference type="InterPro" id="IPR050123">
    <property type="entry name" value="Prok_molybdopt-oxidoreductase"/>
</dbReference>
<dbReference type="InterPro" id="IPR006311">
    <property type="entry name" value="TAT_signal"/>
</dbReference>
<dbReference type="InterPro" id="IPR019546">
    <property type="entry name" value="TAT_signal_bac_arc"/>
</dbReference>
<dbReference type="NCBIfam" id="TIGR01706">
    <property type="entry name" value="NAPA"/>
    <property type="match status" value="1"/>
</dbReference>
<dbReference type="NCBIfam" id="NF010055">
    <property type="entry name" value="PRK13532.1"/>
    <property type="match status" value="1"/>
</dbReference>
<dbReference type="NCBIfam" id="TIGR01409">
    <property type="entry name" value="TAT_signal_seq"/>
    <property type="match status" value="1"/>
</dbReference>
<dbReference type="PANTHER" id="PTHR43105:SF11">
    <property type="entry name" value="PERIPLASMIC NITRATE REDUCTASE"/>
    <property type="match status" value="1"/>
</dbReference>
<dbReference type="PANTHER" id="PTHR43105">
    <property type="entry name" value="RESPIRATORY NITRATE REDUCTASE"/>
    <property type="match status" value="1"/>
</dbReference>
<dbReference type="Pfam" id="PF04879">
    <property type="entry name" value="Molybdop_Fe4S4"/>
    <property type="match status" value="1"/>
</dbReference>
<dbReference type="Pfam" id="PF00384">
    <property type="entry name" value="Molybdopterin"/>
    <property type="match status" value="1"/>
</dbReference>
<dbReference type="Pfam" id="PF01568">
    <property type="entry name" value="Molydop_binding"/>
    <property type="match status" value="1"/>
</dbReference>
<dbReference type="Pfam" id="PF10518">
    <property type="entry name" value="TAT_signal"/>
    <property type="match status" value="1"/>
</dbReference>
<dbReference type="SMART" id="SM00926">
    <property type="entry name" value="Molybdop_Fe4S4"/>
    <property type="match status" value="1"/>
</dbReference>
<dbReference type="SUPFAM" id="SSF50692">
    <property type="entry name" value="ADC-like"/>
    <property type="match status" value="1"/>
</dbReference>
<dbReference type="SUPFAM" id="SSF53706">
    <property type="entry name" value="Formate dehydrogenase/DMSO reductase, domains 1-3"/>
    <property type="match status" value="1"/>
</dbReference>
<dbReference type="PROSITE" id="PS51669">
    <property type="entry name" value="4FE4S_MOW_BIS_MGD"/>
    <property type="match status" value="1"/>
</dbReference>
<dbReference type="PROSITE" id="PS00551">
    <property type="entry name" value="MOLYBDOPTERIN_PROK_1"/>
    <property type="match status" value="1"/>
</dbReference>
<dbReference type="PROSITE" id="PS51318">
    <property type="entry name" value="TAT"/>
    <property type="match status" value="1"/>
</dbReference>
<sequence length="830" mass="93765">MELNRRDFMKANAAVAAAAAAGITIPVKNVHAADDDMGIRWDKAPCRYCGTGCSVLVGTKDGRVVATQGDPDAEVNRGLNCIKGYFLSKIMYGADRVQTPLLRMKDGKFHKEGDFTPVSWDQAFTVMADKIKAILKEKKDPNAIGMFSSGQTTIFEGYAKVKLWKAGLRSNTIDPNARHCMASAAVAFLRTFGMDEPMGCYNDIEKTDAFVLWGSNMAEMHPILWSRISDRRLSSDKVKVVVMSTFEHRSFELADTPIIFKPHSDLAILNYIANYIIQNDKVNWDFVNKHTKFKRGETDIGYGLRPEHPLEVAAKNRKTAGKMYDSDFEEFKKIVAPYTLEEAHRISGVPKDQLETLAKMYADPQQNLVSFWTMGFNQHTRGVWVNHMVYNVHLLTGKISKPGCGPFSLTGQPSACGTAREVGTFVHRLPADMVVTNPKHVEIAENIWKLPKGTISNKPGFPAVQQSRALKDGKLNFLWQLCTNNMQGGPNINEEIFPGWRNPDNLIVVSDPYPSASAVAADLILPTCMWVEKEGAYGNAERRTQFWRQQVKGPGQSRSDLWQIVEFSKYFKTEEVWSEELLAQMPEYRGKTLYEVLYLNGEVNKFQTPTNVPGYINDEAEDFGFYLQKGLFEEYASFGRGHGHDLADFDTYHQVRGLRWPVVDGKETLWRYREGYDPYVKAGEEVSFYGYPDKKAIILGVPYEAPAESPDEEYDLWLCTGRVLEHWHTGTMTRRVPELHKAFPNNLCWMHPTDAKKRGLRHGDKVKLITRRGEMISHLDTRGRNKCPEGLIYTTFFDAGQLANKLTLDATDPISGETDYKKCAVKVVKA</sequence>
<proteinExistence type="inferred from homology"/>
<name>NAPA_MANSM</name>